<reference key="1">
    <citation type="journal article" date="1996" name="Science">
        <title>Complete genome sequence of the methanogenic archaeon, Methanococcus jannaschii.</title>
        <authorList>
            <person name="Bult C.J."/>
            <person name="White O."/>
            <person name="Olsen G.J."/>
            <person name="Zhou L."/>
            <person name="Fleischmann R.D."/>
            <person name="Sutton G.G."/>
            <person name="Blake J.A."/>
            <person name="FitzGerald L.M."/>
            <person name="Clayton R.A."/>
            <person name="Gocayne J.D."/>
            <person name="Kerlavage A.R."/>
            <person name="Dougherty B.A."/>
            <person name="Tomb J.-F."/>
            <person name="Adams M.D."/>
            <person name="Reich C.I."/>
            <person name="Overbeek R."/>
            <person name="Kirkness E.F."/>
            <person name="Weinstock K.G."/>
            <person name="Merrick J.M."/>
            <person name="Glodek A."/>
            <person name="Scott J.L."/>
            <person name="Geoghagen N.S.M."/>
            <person name="Weidman J.F."/>
            <person name="Fuhrmann J.L."/>
            <person name="Nguyen D."/>
            <person name="Utterback T.R."/>
            <person name="Kelley J.M."/>
            <person name="Peterson J.D."/>
            <person name="Sadow P.W."/>
            <person name="Hanna M.C."/>
            <person name="Cotton M.D."/>
            <person name="Roberts K.M."/>
            <person name="Hurst M.A."/>
            <person name="Kaine B.P."/>
            <person name="Borodovsky M."/>
            <person name="Klenk H.-P."/>
            <person name="Fraser C.M."/>
            <person name="Smith H.O."/>
            <person name="Woese C.R."/>
            <person name="Venter J.C."/>
        </authorList>
    </citation>
    <scope>NUCLEOTIDE SEQUENCE [LARGE SCALE GENOMIC DNA]</scope>
    <source>
        <strain>ATCC 43067 / DSM 2661 / JAL-1 / JCM 10045 / NBRC 100440</strain>
    </source>
</reference>
<dbReference type="EMBL" id="L77117">
    <property type="protein sequence ID" value="AAB98402.1"/>
    <property type="molecule type" value="Genomic_DNA"/>
</dbReference>
<dbReference type="PIR" id="E64351">
    <property type="entry name" value="E64351"/>
</dbReference>
<dbReference type="SMR" id="Q57856"/>
<dbReference type="FunCoup" id="Q57856">
    <property type="interactions" value="10"/>
</dbReference>
<dbReference type="STRING" id="243232.MJ_0413"/>
<dbReference type="PaxDb" id="243232-MJ_0413"/>
<dbReference type="EnsemblBacteria" id="AAB98402">
    <property type="protein sequence ID" value="AAB98402"/>
    <property type="gene ID" value="MJ_0413"/>
</dbReference>
<dbReference type="KEGG" id="mja:MJ_0413"/>
<dbReference type="eggNOG" id="arCOG00169">
    <property type="taxonomic scope" value="Archaea"/>
</dbReference>
<dbReference type="HOGENOM" id="CLU_046113_1_4_2"/>
<dbReference type="InParanoid" id="Q57856"/>
<dbReference type="PhylomeDB" id="Q57856"/>
<dbReference type="Proteomes" id="UP000000805">
    <property type="component" value="Chromosome"/>
</dbReference>
<dbReference type="GO" id="GO:0005886">
    <property type="term" value="C:plasma membrane"/>
    <property type="evidence" value="ECO:0007669"/>
    <property type="project" value="UniProtKB-SubCell"/>
</dbReference>
<dbReference type="GO" id="GO:0055085">
    <property type="term" value="P:transmembrane transport"/>
    <property type="evidence" value="ECO:0007669"/>
    <property type="project" value="InterPro"/>
</dbReference>
<dbReference type="CDD" id="cd06261">
    <property type="entry name" value="TM_PBP2"/>
    <property type="match status" value="1"/>
</dbReference>
<dbReference type="FunFam" id="1.10.3720.10:FF:000003">
    <property type="entry name" value="Aliphatic sulfonate ABC transporter permease"/>
    <property type="match status" value="1"/>
</dbReference>
<dbReference type="Gene3D" id="1.10.3720.10">
    <property type="entry name" value="MetI-like"/>
    <property type="match status" value="1"/>
</dbReference>
<dbReference type="InterPro" id="IPR000515">
    <property type="entry name" value="MetI-like"/>
</dbReference>
<dbReference type="InterPro" id="IPR035906">
    <property type="entry name" value="MetI-like_sf"/>
</dbReference>
<dbReference type="PANTHER" id="PTHR30151:SF0">
    <property type="entry name" value="ABC TRANSPORTER PERMEASE PROTEIN MJ0413-RELATED"/>
    <property type="match status" value="1"/>
</dbReference>
<dbReference type="PANTHER" id="PTHR30151">
    <property type="entry name" value="ALKANE SULFONATE ABC TRANSPORTER-RELATED, MEMBRANE SUBUNIT"/>
    <property type="match status" value="1"/>
</dbReference>
<dbReference type="Pfam" id="PF00528">
    <property type="entry name" value="BPD_transp_1"/>
    <property type="match status" value="1"/>
</dbReference>
<dbReference type="SUPFAM" id="SSF161098">
    <property type="entry name" value="MetI-like"/>
    <property type="match status" value="1"/>
</dbReference>
<dbReference type="PROSITE" id="PS50928">
    <property type="entry name" value="ABC_TM1"/>
    <property type="match status" value="1"/>
</dbReference>
<proteinExistence type="inferred from homology"/>
<gene>
    <name type="ordered locus">MJ0413</name>
</gene>
<keyword id="KW-1003">Cell membrane</keyword>
<keyword id="KW-0472">Membrane</keyword>
<keyword id="KW-1185">Reference proteome</keyword>
<keyword id="KW-0812">Transmembrane</keyword>
<keyword id="KW-1133">Transmembrane helix</keyword>
<keyword id="KW-0813">Transport</keyword>
<sequence length="267" mass="29043">MMNHKKGISVKINTKELVLKISLPALAVVIWELLAIYINNPVILPRVEAVINVLIHPFQGILGTGSLIDNTIISIKRVISGFLLASAVAIPLGILMGYYRTVNSLCDTLIELLRPIPPLAWVPLSLAWFGLGEMSMIFIIFIGAFFPILINTISGVKGVPTPLIEAALTLGAKGRDILIKVVIPASSPSILTGLRVGAGIAWMCVVAAEMLPSSNAGLGYLIMYAYSLSRMDVVIACMIIIGLIGLVLDRGLRYIEDKYFVWRKMMK</sequence>
<accession>Q57856</accession>
<evidence type="ECO:0000255" key="1">
    <source>
        <dbReference type="PROSITE-ProRule" id="PRU00441"/>
    </source>
</evidence>
<evidence type="ECO:0000305" key="2"/>
<comment type="function">
    <text>Probably part of a binding-protein-dependent transport system. Probably responsible for the translocation of the substrate across the membrane.</text>
</comment>
<comment type="subcellular location">
    <subcellularLocation>
        <location evidence="2">Cell membrane</location>
        <topology evidence="1">Multi-pass membrane protein</topology>
    </subcellularLocation>
</comment>
<comment type="similarity">
    <text evidence="2">Belongs to the binding-protein-dependent transport system permease family. CysTW subfamily.</text>
</comment>
<organism>
    <name type="scientific">Methanocaldococcus jannaschii (strain ATCC 43067 / DSM 2661 / JAL-1 / JCM 10045 / NBRC 100440)</name>
    <name type="common">Methanococcus jannaschii</name>
    <dbReference type="NCBI Taxonomy" id="243232"/>
    <lineage>
        <taxon>Archaea</taxon>
        <taxon>Methanobacteriati</taxon>
        <taxon>Methanobacteriota</taxon>
        <taxon>Methanomada group</taxon>
        <taxon>Methanococci</taxon>
        <taxon>Methanococcales</taxon>
        <taxon>Methanocaldococcaceae</taxon>
        <taxon>Methanocaldococcus</taxon>
    </lineage>
</organism>
<protein>
    <recommendedName>
        <fullName>Putative ABC transporter permease protein MJ0413</fullName>
    </recommendedName>
</protein>
<feature type="chain" id="PRO_0000060305" description="Putative ABC transporter permease protein MJ0413">
    <location>
        <begin position="1"/>
        <end position="267"/>
    </location>
</feature>
<feature type="transmembrane region" description="Helical" evidence="1">
    <location>
        <begin position="18"/>
        <end position="38"/>
    </location>
</feature>
<feature type="transmembrane region" description="Helical" evidence="1">
    <location>
        <begin position="48"/>
        <end position="68"/>
    </location>
</feature>
<feature type="transmembrane region" description="Helical" evidence="1">
    <location>
        <begin position="78"/>
        <end position="98"/>
    </location>
</feature>
<feature type="transmembrane region" description="Helical" evidence="1">
    <location>
        <begin position="115"/>
        <end position="135"/>
    </location>
</feature>
<feature type="transmembrane region" description="Helical" evidence="1">
    <location>
        <begin position="136"/>
        <end position="156"/>
    </location>
</feature>
<feature type="transmembrane region" description="Helical" evidence="1">
    <location>
        <begin position="188"/>
        <end position="208"/>
    </location>
</feature>
<feature type="transmembrane region" description="Helical" evidence="1">
    <location>
        <begin position="228"/>
        <end position="248"/>
    </location>
</feature>
<feature type="domain" description="ABC transmembrane type-1" evidence="1">
    <location>
        <begin position="71"/>
        <end position="252"/>
    </location>
</feature>
<name>Y413_METJA</name>